<comment type="function">
    <text>The pyruvate dehydrogenase complex catalyzes the overall conversion of pyruvate to acetyl-CoA and CO(2), and thereby links the glycolytic pathway to the tricarboxylic cycle.</text>
</comment>
<comment type="catalytic activity">
    <reaction>
        <text>N(6)-[(R)-lipoyl]-L-lysyl-[protein] + pyruvate + H(+) = N(6)-[(R)-S(8)-acetyldihydrolipoyl]-L-lysyl-[protein] + CO2</text>
        <dbReference type="Rhea" id="RHEA:19189"/>
        <dbReference type="Rhea" id="RHEA-COMP:10474"/>
        <dbReference type="Rhea" id="RHEA-COMP:10478"/>
        <dbReference type="ChEBI" id="CHEBI:15361"/>
        <dbReference type="ChEBI" id="CHEBI:15378"/>
        <dbReference type="ChEBI" id="CHEBI:16526"/>
        <dbReference type="ChEBI" id="CHEBI:83099"/>
        <dbReference type="ChEBI" id="CHEBI:83111"/>
        <dbReference type="EC" id="1.2.4.1"/>
    </reaction>
</comment>
<comment type="cofactor">
    <cofactor evidence="2">
        <name>thiamine diphosphate</name>
        <dbReference type="ChEBI" id="CHEBI:58937"/>
    </cofactor>
    <cofactor evidence="2">
        <name>Mg(2+)</name>
        <dbReference type="ChEBI" id="CHEBI:18420"/>
    </cofactor>
</comment>
<comment type="activity regulation">
    <text>Pyruvate dehydrogenase activity is inhibited by phosphorylation of PDHA2; it is reactivated by dephosphorylation.</text>
</comment>
<comment type="subunit">
    <text evidence="1">Heterotetramer of two PDHA2 and two PDHB subunits. The heterotetramer interacts with DLAT, and is part of the multimeric pyruvate dehydrogenase complex that contains multiple copies of pyruvate dehydrogenase (E1), dihydrolipoamide acetyltransferase (DLAT, E2) and lipoamide dehydrogenase (DLD, E3) (By similarity).</text>
</comment>
<comment type="subcellular location">
    <subcellularLocation>
        <location>Mitochondrion matrix</location>
    </subcellularLocation>
</comment>
<protein>
    <recommendedName>
        <fullName>Pyruvate dehydrogenase E1 component subunit alpha type II, mitochondrial</fullName>
        <shortName>PDHA2</shortName>
        <shortName>PDHE1-A</shortName>
        <ecNumber>1.2.4.1</ecNumber>
    </recommendedName>
</protein>
<keyword id="KW-0119">Carbohydrate metabolism</keyword>
<keyword id="KW-0313">Glucose metabolism</keyword>
<keyword id="KW-0460">Magnesium</keyword>
<keyword id="KW-0479">Metal-binding</keyword>
<keyword id="KW-0496">Mitochondrion</keyword>
<keyword id="KW-0560">Oxidoreductase</keyword>
<keyword id="KW-0597">Phosphoprotein</keyword>
<keyword id="KW-0670">Pyruvate</keyword>
<keyword id="KW-0786">Thiamine pyrophosphate</keyword>
<keyword id="KW-0809">Transit peptide</keyword>
<keyword id="KW-0816">Tricarboxylic acid cycle</keyword>
<sequence length="391" mass="43207">SNIFKGPTVGSSVVAMSARLASTEATFQAKPFKLHKLDSGPDVNMHVTKEDALRYYTQMQTIRRMETAAGNLYKEKKVRGFCHLYSGQEACAVGMKAAMEPGDAAITAYRCHGWTYLSGSPVAKVLCELTGRITGNVYGKGGSMHMYGENFYGGNGIVGAQQPLGTGIAFAMKYKKQKNVCITLFGDGATNQGQLYESMNMAKLWELPVLYVCENNGYGMGTSAARSSASTDYYTRGDYVPGFWVDGMDVLAVRQAIRWGKEWCNAGKGPLMIEMATYRYGGHSMSDPGTSYRTREEIQEVRKTRDPITGFKDKIVTAGLVTEDELKEVDKEIRKEVDAAVKQAHTDKEAPVEMLLTDIYYNTPAQYVRCTTEDVLQQYVTSEEAFKALSK</sequence>
<evidence type="ECO:0000250" key="1"/>
<evidence type="ECO:0000250" key="2">
    <source>
        <dbReference type="UniProtKB" id="P08559"/>
    </source>
</evidence>
<evidence type="ECO:0000305" key="3"/>
<accession>P26268</accession>
<organism>
    <name type="scientific">Ascaris suum</name>
    <name type="common">Pig roundworm</name>
    <name type="synonym">Ascaris lumbricoides</name>
    <dbReference type="NCBI Taxonomy" id="6253"/>
    <lineage>
        <taxon>Eukaryota</taxon>
        <taxon>Metazoa</taxon>
        <taxon>Ecdysozoa</taxon>
        <taxon>Nematoda</taxon>
        <taxon>Chromadorea</taxon>
        <taxon>Rhabditida</taxon>
        <taxon>Spirurina</taxon>
        <taxon>Ascaridomorpha</taxon>
        <taxon>Ascaridoidea</taxon>
        <taxon>Ascarididae</taxon>
        <taxon>Ascaris</taxon>
    </lineage>
</organism>
<feature type="transit peptide" description="Mitochondrion">
    <location>
        <begin position="1" status="less than"/>
        <end position="17"/>
    </location>
</feature>
<feature type="chain" id="PRO_0000020438" description="Pyruvate dehydrogenase E1 component subunit alpha type II, mitochondrial">
    <location>
        <begin position="18"/>
        <end position="391"/>
    </location>
</feature>
<feature type="binding site" evidence="2">
    <location>
        <position position="83"/>
    </location>
    <ligand>
        <name>pyruvate</name>
        <dbReference type="ChEBI" id="CHEBI:15361"/>
    </ligand>
</feature>
<feature type="binding site" evidence="2">
    <location>
        <position position="109"/>
    </location>
    <ligand>
        <name>pyruvate</name>
        <dbReference type="ChEBI" id="CHEBI:15361"/>
    </ligand>
</feature>
<feature type="binding site" evidence="2">
    <location>
        <position position="109"/>
    </location>
    <ligand>
        <name>thiamine diphosphate</name>
        <dbReference type="ChEBI" id="CHEBI:58937"/>
        <note>ligand shared with beta subunit</note>
    </ligand>
</feature>
<feature type="binding site" evidence="2">
    <location>
        <position position="110"/>
    </location>
    <ligand>
        <name>pyruvate</name>
        <dbReference type="ChEBI" id="CHEBI:15361"/>
    </ligand>
</feature>
<feature type="binding site" evidence="2">
    <location>
        <position position="110"/>
    </location>
    <ligand>
        <name>thiamine diphosphate</name>
        <dbReference type="ChEBI" id="CHEBI:58937"/>
        <note>ligand shared with beta subunit</note>
    </ligand>
</feature>
<feature type="binding site" evidence="2">
    <location>
        <position position="148"/>
    </location>
    <ligand>
        <name>pyruvate</name>
        <dbReference type="ChEBI" id="CHEBI:15361"/>
    </ligand>
</feature>
<feature type="binding site" evidence="2">
    <location>
        <position position="156"/>
    </location>
    <ligand>
        <name>pyruvate</name>
        <dbReference type="ChEBI" id="CHEBI:15361"/>
    </ligand>
</feature>
<feature type="binding site" evidence="2">
    <location>
        <position position="156"/>
    </location>
    <ligand>
        <name>thiamine diphosphate</name>
        <dbReference type="ChEBI" id="CHEBI:58937"/>
        <note>ligand shared with beta subunit</note>
    </ligand>
</feature>
<feature type="binding site" evidence="2">
    <location>
        <position position="158"/>
    </location>
    <ligand>
        <name>pyruvate</name>
        <dbReference type="ChEBI" id="CHEBI:15361"/>
    </ligand>
</feature>
<feature type="binding site" evidence="2">
    <location>
        <position position="158"/>
    </location>
    <ligand>
        <name>thiamine diphosphate</name>
        <dbReference type="ChEBI" id="CHEBI:58937"/>
        <note>ligand shared with beta subunit</note>
    </ligand>
</feature>
<feature type="binding site" evidence="2">
    <location>
        <position position="187"/>
    </location>
    <ligand>
        <name>Mg(2+)</name>
        <dbReference type="ChEBI" id="CHEBI:18420"/>
    </ligand>
</feature>
<feature type="binding site" evidence="2">
    <location>
        <position position="187"/>
    </location>
    <ligand>
        <name>pyruvate</name>
        <dbReference type="ChEBI" id="CHEBI:15361"/>
    </ligand>
</feature>
<feature type="binding site" evidence="2">
    <location>
        <position position="187"/>
    </location>
    <ligand>
        <name>thiamine diphosphate</name>
        <dbReference type="ChEBI" id="CHEBI:58937"/>
        <note>ligand shared with beta subunit</note>
    </ligand>
</feature>
<feature type="binding site" evidence="2">
    <location>
        <position position="188"/>
    </location>
    <ligand>
        <name>pyruvate</name>
        <dbReference type="ChEBI" id="CHEBI:15361"/>
    </ligand>
</feature>
<feature type="binding site" evidence="2">
    <location>
        <position position="188"/>
    </location>
    <ligand>
        <name>thiamine diphosphate</name>
        <dbReference type="ChEBI" id="CHEBI:58937"/>
        <note>ligand shared with beta subunit</note>
    </ligand>
</feature>
<feature type="binding site" evidence="2">
    <location>
        <position position="189"/>
    </location>
    <ligand>
        <name>pyruvate</name>
        <dbReference type="ChEBI" id="CHEBI:15361"/>
    </ligand>
</feature>
<feature type="binding site" evidence="2">
    <location>
        <position position="189"/>
    </location>
    <ligand>
        <name>thiamine diphosphate</name>
        <dbReference type="ChEBI" id="CHEBI:58937"/>
        <note>ligand shared with beta subunit</note>
    </ligand>
</feature>
<feature type="binding site" evidence="2">
    <location>
        <position position="216"/>
    </location>
    <ligand>
        <name>Mg(2+)</name>
        <dbReference type="ChEBI" id="CHEBI:18420"/>
    </ligand>
</feature>
<feature type="binding site" evidence="2">
    <location>
        <position position="216"/>
    </location>
    <ligand>
        <name>pyruvate</name>
        <dbReference type="ChEBI" id="CHEBI:15361"/>
    </ligand>
</feature>
<feature type="binding site" evidence="2">
    <location>
        <position position="216"/>
    </location>
    <ligand>
        <name>thiamine diphosphate</name>
        <dbReference type="ChEBI" id="CHEBI:58937"/>
        <note>ligand shared with beta subunit</note>
    </ligand>
</feature>
<feature type="binding site" evidence="2">
    <location>
        <position position="218"/>
    </location>
    <ligand>
        <name>Mg(2+)</name>
        <dbReference type="ChEBI" id="CHEBI:18420"/>
    </ligand>
</feature>
<feature type="binding site" evidence="2">
    <location>
        <position position="218"/>
    </location>
    <ligand>
        <name>pyruvate</name>
        <dbReference type="ChEBI" id="CHEBI:15361"/>
    </ligand>
</feature>
<feature type="binding site" evidence="2">
    <location>
        <position position="283"/>
    </location>
    <ligand>
        <name>thiamine diphosphate</name>
        <dbReference type="ChEBI" id="CHEBI:58937"/>
        <note>ligand shared with beta subunit</note>
    </ligand>
</feature>
<feature type="modified residue" description="Phosphoserine" evidence="3">
    <location>
        <position position="284"/>
    </location>
</feature>
<feature type="modified residue" description="Phosphoserine" evidence="3">
    <location>
        <position position="291"/>
    </location>
</feature>
<feature type="non-terminal residue">
    <location>
        <position position="1"/>
    </location>
</feature>
<reference key="1">
    <citation type="journal article" date="1992" name="Mol. Biochem. Parasitol.">
        <title>Characterization of cDNA clones for the alpha subunit of pyruvate dehydrogenase from Ascaris suum.</title>
        <authorList>
            <person name="Johnson K.R."/>
            <person name="Komuniecki R."/>
            <person name="Sun Y."/>
            <person name="Wheelock M.J."/>
        </authorList>
    </citation>
    <scope>NUCLEOTIDE SEQUENCE [MRNA]</scope>
</reference>
<dbReference type="EC" id="1.2.4.1"/>
<dbReference type="EMBL" id="M76554">
    <property type="protein sequence ID" value="AAA29377.1"/>
    <property type="molecule type" value="mRNA"/>
</dbReference>
<dbReference type="SMR" id="P26268"/>
<dbReference type="GO" id="GO:0005759">
    <property type="term" value="C:mitochondrial matrix"/>
    <property type="evidence" value="ECO:0007669"/>
    <property type="project" value="UniProtKB-SubCell"/>
</dbReference>
<dbReference type="GO" id="GO:0046872">
    <property type="term" value="F:metal ion binding"/>
    <property type="evidence" value="ECO:0007669"/>
    <property type="project" value="UniProtKB-KW"/>
</dbReference>
<dbReference type="GO" id="GO:0004739">
    <property type="term" value="F:pyruvate dehydrogenase (acetyl-transferring) activity"/>
    <property type="evidence" value="ECO:0007669"/>
    <property type="project" value="UniProtKB-EC"/>
</dbReference>
<dbReference type="GO" id="GO:0006006">
    <property type="term" value="P:glucose metabolic process"/>
    <property type="evidence" value="ECO:0007669"/>
    <property type="project" value="UniProtKB-KW"/>
</dbReference>
<dbReference type="GO" id="GO:0006086">
    <property type="term" value="P:pyruvate decarboxylation to acetyl-CoA"/>
    <property type="evidence" value="ECO:0007669"/>
    <property type="project" value="InterPro"/>
</dbReference>
<dbReference type="GO" id="GO:0006099">
    <property type="term" value="P:tricarboxylic acid cycle"/>
    <property type="evidence" value="ECO:0007669"/>
    <property type="project" value="UniProtKB-KW"/>
</dbReference>
<dbReference type="CDD" id="cd02000">
    <property type="entry name" value="TPP_E1_PDC_ADC_BCADC"/>
    <property type="match status" value="1"/>
</dbReference>
<dbReference type="FunFam" id="3.40.50.970:FF:000013">
    <property type="entry name" value="Pyruvate dehydrogenase E1 component subunit alpha"/>
    <property type="match status" value="1"/>
</dbReference>
<dbReference type="Gene3D" id="3.40.50.970">
    <property type="match status" value="1"/>
</dbReference>
<dbReference type="InterPro" id="IPR001017">
    <property type="entry name" value="DH_E1"/>
</dbReference>
<dbReference type="InterPro" id="IPR050642">
    <property type="entry name" value="PDH_E1_Alpha_Subunit"/>
</dbReference>
<dbReference type="InterPro" id="IPR017597">
    <property type="entry name" value="Pyrv_DH_E1_asu_subgrp-y"/>
</dbReference>
<dbReference type="InterPro" id="IPR029061">
    <property type="entry name" value="THDP-binding"/>
</dbReference>
<dbReference type="NCBIfam" id="TIGR03182">
    <property type="entry name" value="PDH_E1_alph_y"/>
    <property type="match status" value="1"/>
</dbReference>
<dbReference type="PANTHER" id="PTHR11516:SF60">
    <property type="entry name" value="PYRUVATE DEHYDROGENASE E1 COMPONENT SUBUNIT ALPHA"/>
    <property type="match status" value="1"/>
</dbReference>
<dbReference type="PANTHER" id="PTHR11516">
    <property type="entry name" value="PYRUVATE DEHYDROGENASE E1 COMPONENT, ALPHA SUBUNIT BACTERIAL AND ORGANELLAR"/>
    <property type="match status" value="1"/>
</dbReference>
<dbReference type="Pfam" id="PF00676">
    <property type="entry name" value="E1_dh"/>
    <property type="match status" value="1"/>
</dbReference>
<dbReference type="SUPFAM" id="SSF52518">
    <property type="entry name" value="Thiamin diphosphate-binding fold (THDP-binding)"/>
    <property type="match status" value="1"/>
</dbReference>
<name>ODPT_ASCSU</name>
<proteinExistence type="evidence at transcript level"/>